<protein>
    <recommendedName>
        <fullName>Probable peptidyl-prolyl cis-trans isomerase A</fullName>
        <shortName>PPIase A</shortName>
        <ecNumber>5.2.1.8</ecNumber>
    </recommendedName>
    <alternativeName>
        <fullName>Rotamase A</fullName>
    </alternativeName>
</protein>
<organism>
    <name type="scientific">Mycobacterium leprae (strain TN)</name>
    <dbReference type="NCBI Taxonomy" id="272631"/>
    <lineage>
        <taxon>Bacteria</taxon>
        <taxon>Bacillati</taxon>
        <taxon>Actinomycetota</taxon>
        <taxon>Actinomycetes</taxon>
        <taxon>Mycobacteriales</taxon>
        <taxon>Mycobacteriaceae</taxon>
        <taxon>Mycobacterium</taxon>
    </lineage>
</organism>
<sequence length="182" mass="19367">MAHCDFVTNSLIQNATATLHTNRGDIKVALFGNHVPKTVANFVGLAQGTKEYSTQNASGGPSGPFYDGAVFHRVIQGFMIQGGDPTGTGRGGPGYKFADEFHPELQFDKPYLLAMANAGPGTNGSQFFITVGETPHLNRRHTIFGEVTDPDSQKVVDAISTTATDGNDRPTEPVVIDSITIS</sequence>
<evidence type="ECO:0000250" key="1"/>
<evidence type="ECO:0000255" key="2">
    <source>
        <dbReference type="PROSITE-ProRule" id="PRU00156"/>
    </source>
</evidence>
<evidence type="ECO:0000256" key="3">
    <source>
        <dbReference type="SAM" id="MobiDB-lite"/>
    </source>
</evidence>
<evidence type="ECO:0000305" key="4"/>
<accession>Q9CDE9</accession>
<reference key="1">
    <citation type="journal article" date="2001" name="Nature">
        <title>Massive gene decay in the leprosy bacillus.</title>
        <authorList>
            <person name="Cole S.T."/>
            <person name="Eiglmeier K."/>
            <person name="Parkhill J."/>
            <person name="James K.D."/>
            <person name="Thomson N.R."/>
            <person name="Wheeler P.R."/>
            <person name="Honore N."/>
            <person name="Garnier T."/>
            <person name="Churcher C.M."/>
            <person name="Harris D.E."/>
            <person name="Mungall K.L."/>
            <person name="Basham D."/>
            <person name="Brown D."/>
            <person name="Chillingworth T."/>
            <person name="Connor R."/>
            <person name="Davies R.M."/>
            <person name="Devlin K."/>
            <person name="Duthoy S."/>
            <person name="Feltwell T."/>
            <person name="Fraser A."/>
            <person name="Hamlin N."/>
            <person name="Holroyd S."/>
            <person name="Hornsby T."/>
            <person name="Jagels K."/>
            <person name="Lacroix C."/>
            <person name="Maclean J."/>
            <person name="Moule S."/>
            <person name="Murphy L.D."/>
            <person name="Oliver K."/>
            <person name="Quail M.A."/>
            <person name="Rajandream M.A."/>
            <person name="Rutherford K.M."/>
            <person name="Rutter S."/>
            <person name="Seeger K."/>
            <person name="Simon S."/>
            <person name="Simmonds M."/>
            <person name="Skelton J."/>
            <person name="Squares R."/>
            <person name="Squares S."/>
            <person name="Stevens K."/>
            <person name="Taylor K."/>
            <person name="Whitehead S."/>
            <person name="Woodward J.R."/>
            <person name="Barrell B.G."/>
        </authorList>
    </citation>
    <scope>NUCLEOTIDE SEQUENCE [LARGE SCALE GENOMIC DNA]</scope>
    <source>
        <strain>TN</strain>
    </source>
</reference>
<dbReference type="EC" id="5.2.1.8"/>
<dbReference type="EMBL" id="AL583917">
    <property type="protein sequence ID" value="CAC29519.1"/>
    <property type="molecule type" value="Genomic_DNA"/>
</dbReference>
<dbReference type="PIR" id="C86910">
    <property type="entry name" value="C86910"/>
</dbReference>
<dbReference type="RefSeq" id="NP_301138.1">
    <property type="nucleotide sequence ID" value="NC_002677.1"/>
</dbReference>
<dbReference type="RefSeq" id="WP_010907463.1">
    <property type="nucleotide sequence ID" value="NC_002677.1"/>
</dbReference>
<dbReference type="SMR" id="Q9CDE9"/>
<dbReference type="STRING" id="272631.gene:17573822"/>
<dbReference type="KEGG" id="mle:ML0011"/>
<dbReference type="PATRIC" id="fig|272631.5.peg.11"/>
<dbReference type="Leproma" id="ML0011"/>
<dbReference type="eggNOG" id="COG0652">
    <property type="taxonomic scope" value="Bacteria"/>
</dbReference>
<dbReference type="HOGENOM" id="CLU_012062_16_3_11"/>
<dbReference type="OrthoDB" id="9807797at2"/>
<dbReference type="Proteomes" id="UP000000806">
    <property type="component" value="Chromosome"/>
</dbReference>
<dbReference type="GO" id="GO:0005737">
    <property type="term" value="C:cytoplasm"/>
    <property type="evidence" value="ECO:0007669"/>
    <property type="project" value="UniProtKB-SubCell"/>
</dbReference>
<dbReference type="GO" id="GO:0003755">
    <property type="term" value="F:peptidyl-prolyl cis-trans isomerase activity"/>
    <property type="evidence" value="ECO:0007669"/>
    <property type="project" value="UniProtKB-KW"/>
</dbReference>
<dbReference type="GO" id="GO:0006457">
    <property type="term" value="P:protein folding"/>
    <property type="evidence" value="ECO:0007669"/>
    <property type="project" value="InterPro"/>
</dbReference>
<dbReference type="CDD" id="cd00317">
    <property type="entry name" value="cyclophilin"/>
    <property type="match status" value="1"/>
</dbReference>
<dbReference type="FunFam" id="2.40.100.10:FF:000028">
    <property type="entry name" value="Peptidyl-prolyl cis-trans isomerase"/>
    <property type="match status" value="1"/>
</dbReference>
<dbReference type="Gene3D" id="2.40.100.10">
    <property type="entry name" value="Cyclophilin-like"/>
    <property type="match status" value="1"/>
</dbReference>
<dbReference type="InterPro" id="IPR029000">
    <property type="entry name" value="Cyclophilin-like_dom_sf"/>
</dbReference>
<dbReference type="InterPro" id="IPR024936">
    <property type="entry name" value="Cyclophilin-type_PPIase"/>
</dbReference>
<dbReference type="InterPro" id="IPR020892">
    <property type="entry name" value="Cyclophilin-type_PPIase_CS"/>
</dbReference>
<dbReference type="InterPro" id="IPR002130">
    <property type="entry name" value="Cyclophilin-type_PPIase_dom"/>
</dbReference>
<dbReference type="InterPro" id="IPR044666">
    <property type="entry name" value="Cyclophilin_A-like"/>
</dbReference>
<dbReference type="PANTHER" id="PTHR45625">
    <property type="entry name" value="PEPTIDYL-PROLYL CIS-TRANS ISOMERASE-RELATED"/>
    <property type="match status" value="1"/>
</dbReference>
<dbReference type="PANTHER" id="PTHR45625:SF4">
    <property type="entry name" value="PEPTIDYLPROLYL ISOMERASE DOMAIN AND WD REPEAT-CONTAINING PROTEIN 1"/>
    <property type="match status" value="1"/>
</dbReference>
<dbReference type="Pfam" id="PF00160">
    <property type="entry name" value="Pro_isomerase"/>
    <property type="match status" value="1"/>
</dbReference>
<dbReference type="PIRSF" id="PIRSF001467">
    <property type="entry name" value="Peptidylpro_ismrse"/>
    <property type="match status" value="1"/>
</dbReference>
<dbReference type="PRINTS" id="PR00153">
    <property type="entry name" value="CSAPPISMRASE"/>
</dbReference>
<dbReference type="SUPFAM" id="SSF50891">
    <property type="entry name" value="Cyclophilin-like"/>
    <property type="match status" value="1"/>
</dbReference>
<dbReference type="PROSITE" id="PS00170">
    <property type="entry name" value="CSA_PPIASE_1"/>
    <property type="match status" value="1"/>
</dbReference>
<dbReference type="PROSITE" id="PS50072">
    <property type="entry name" value="CSA_PPIASE_2"/>
    <property type="match status" value="1"/>
</dbReference>
<proteinExistence type="inferred from homology"/>
<comment type="function">
    <text evidence="1">PPIases accelerate the folding of proteins. It catalyzes the cis-trans isomerization of proline imidic peptide bonds in oligopeptides (By similarity).</text>
</comment>
<comment type="catalytic activity">
    <reaction>
        <text>[protein]-peptidylproline (omega=180) = [protein]-peptidylproline (omega=0)</text>
        <dbReference type="Rhea" id="RHEA:16237"/>
        <dbReference type="Rhea" id="RHEA-COMP:10747"/>
        <dbReference type="Rhea" id="RHEA-COMP:10748"/>
        <dbReference type="ChEBI" id="CHEBI:83833"/>
        <dbReference type="ChEBI" id="CHEBI:83834"/>
        <dbReference type="EC" id="5.2.1.8"/>
    </reaction>
</comment>
<comment type="subcellular location">
    <subcellularLocation>
        <location evidence="1">Cytoplasm</location>
    </subcellularLocation>
</comment>
<comment type="similarity">
    <text evidence="4">Belongs to the cyclophilin-type PPIase family.</text>
</comment>
<feature type="chain" id="PRO_0000064208" description="Probable peptidyl-prolyl cis-trans isomerase A">
    <location>
        <begin position="1"/>
        <end position="182"/>
    </location>
</feature>
<feature type="domain" description="PPIase cyclophilin-type" evidence="2">
    <location>
        <begin position="13"/>
        <end position="181"/>
    </location>
</feature>
<feature type="region of interest" description="Disordered" evidence="3">
    <location>
        <begin position="161"/>
        <end position="182"/>
    </location>
</feature>
<name>PPIA_MYCLE</name>
<keyword id="KW-0963">Cytoplasm</keyword>
<keyword id="KW-0413">Isomerase</keyword>
<keyword id="KW-1185">Reference proteome</keyword>
<keyword id="KW-0697">Rotamase</keyword>
<gene>
    <name type="primary">ppiA</name>
    <name type="ordered locus">ML0011</name>
</gene>